<reference key="1">
    <citation type="journal article" date="1994" name="Biochem. Biophys. Res. Commun.">
        <title>Molecular cloning of the rat complement regulatory protein, 5I2 antigen.</title>
        <authorList>
            <person name="Sakurada C."/>
            <person name="Seno H."/>
            <person name="Dohi N."/>
            <person name="Takizawa H."/>
            <person name="Nonaka M."/>
            <person name="Okada N."/>
            <person name="Okada H."/>
        </authorList>
    </citation>
    <scope>NUCLEOTIDE SEQUENCE [MRNA] (ISOFORMS 1 AND 2)</scope>
    <source>
        <tissue>Liver</tissue>
    </source>
</reference>
<reference key="2">
    <citation type="journal article" date="1995" name="Immunogenetics">
        <title>Molecular characterization of rat Crry: widespread distribution of two alternative forms of Crry mRNA.</title>
        <authorList>
            <person name="Quigg R.J."/>
            <person name="Lo C.F."/>
            <person name="Alexander J.J."/>
            <person name="Sneed A.E. III"/>
            <person name="Moxley G."/>
        </authorList>
    </citation>
    <scope>NUCLEOTIDE SEQUENCE [MRNA] (ISOFORM 1)</scope>
    <source>
        <strain>Sprague-Dawley</strain>
    </source>
</reference>
<reference key="3">
    <citation type="journal article" date="2004" name="Genome Res.">
        <title>The status, quality, and expansion of the NIH full-length cDNA project: the Mammalian Gene Collection (MGC).</title>
        <authorList>
            <consortium name="The MGC Project Team"/>
        </authorList>
    </citation>
    <scope>NUCLEOTIDE SEQUENCE [LARGE SCALE MRNA] (ISOFORM 1)</scope>
    <source>
        <tissue>Prostate</tissue>
    </source>
</reference>
<reference key="4">
    <citation type="journal article" date="1994" name="J. Immunol.">
        <title>Complement inhibitor of rat cell membrane resembling mouse Crry/p65.</title>
        <authorList>
            <person name="Takizawa H."/>
            <person name="Okada N."/>
            <person name="Okada H."/>
        </authorList>
    </citation>
    <scope>PROTEIN SEQUENCE OF 39-53; 66-74; 369-373 AND 520-528 (ISOFORM 1)</scope>
    <scope>INTERACTION WITH C3B</scope>
    <scope>FUNCTION</scope>
</reference>
<reference key="5">
    <citation type="journal article" date="1995" name="J. Immunol.">
        <title>Crry and CD59 regulate complement in rat glomerular epithelial cells and are inhibited by the nephritogenic antibody of passive Heymann nephritis.</title>
        <authorList>
            <person name="Quigg R.J."/>
            <person name="Holers V.M."/>
            <person name="Morgan B.P."/>
            <person name="Sneed A.E. III"/>
        </authorList>
    </citation>
    <scope>FUNCTION</scope>
</reference>
<reference key="6">
    <citation type="journal article" date="2004" name="Life Sci.">
        <title>The role of rat Crry, a complement regulatory protein, in proliferation of thymocytes.</title>
        <authorList>
            <person name="Antic Stankovic J."/>
            <person name="Vucevic D."/>
            <person name="Majstorovic I."/>
            <person name="Vasilijic S."/>
            <person name="Colic M."/>
        </authorList>
    </citation>
    <scope>FUNCTION</scope>
</reference>
<reference key="7">
    <citation type="journal article" date="2012" name="Nat. Commun.">
        <title>Quantitative maps of protein phosphorylation sites across 14 different rat organs and tissues.</title>
        <authorList>
            <person name="Lundby A."/>
            <person name="Secher A."/>
            <person name="Lage K."/>
            <person name="Nordsborg N.B."/>
            <person name="Dmytriyev A."/>
            <person name="Lundby C."/>
            <person name="Olsen J.V."/>
        </authorList>
    </citation>
    <scope>PHOSPHORYLATION [LARGE SCALE ANALYSIS] AT SER-527 AND SER-554</scope>
    <scope>IDENTIFICATION BY MASS SPECTROMETRY [LARGE SCALE ANALYSIS]</scope>
</reference>
<reference key="8">
    <citation type="journal article" date="2003" name="J. Mol. Biol.">
        <title>The extended multidomain solution structures of the complement protein Crry and its chimeric conjugate Crry-Ig by scattering, analytical ultracentrifugation and constrained modelling: implications for function and therapy.</title>
        <authorList>
            <person name="Aslam M."/>
            <person name="Guthridge J.M."/>
            <person name="Hack B.K."/>
            <person name="Quigg R.J."/>
            <person name="Holers V.M."/>
            <person name="Perkins S.J."/>
        </authorList>
    </citation>
    <scope>3D-STRUCTURE MODELING OF 34-353</scope>
</reference>
<reference key="9">
    <citation type="journal article" date="2011" name="Acta Crystallogr. F">
        <title>Structures of the rat complement regulator CrrY.</title>
        <authorList>
            <person name="Roversi P."/>
            <person name="Johnson S."/>
            <person name="Caesar J.J."/>
            <person name="McLean F."/>
            <person name="Leath K.J."/>
            <person name="Tsiftsoglou S.A."/>
            <person name="Morgan B.P."/>
            <person name="Harris C.L."/>
            <person name="Sim R.B."/>
            <person name="Lea S.M."/>
        </authorList>
    </citation>
    <scope>X-RAY CRYSTALLOGRAPHY (2.5 ANGSTROMS) OF 1-288</scope>
    <scope>DISULFIDE BONDS</scope>
</reference>
<comment type="function">
    <text evidence="5 7 8">Acts as a cofactor for complement factor I, a serine protease which protects autologous cells against complement-mediated injury by cleaving C3b and C4b deposited on host tissue. Also acts as a decay-accelerating factor, preventing the formation of C4b2a and C3bBb, the amplification convertases of the complement cascade. Seems to act as a costimulatory factor for T-cells. May play a crucial role in early embryonic development by maintaining fetomaternal tolerance.</text>
</comment>
<comment type="subunit">
    <text evidence="8">Interacts with C3b.</text>
</comment>
<comment type="subcellular location">
    <subcellularLocation>
        <location>Membrane</location>
        <topology>Single-pass type I membrane protein</topology>
    </subcellularLocation>
</comment>
<comment type="alternative products">
    <event type="alternative splicing"/>
    <isoform>
        <id>Q63135-1</id>
        <name>1</name>
        <sequence type="displayed"/>
    </isoform>
    <isoform>
        <id>Q63135-2</id>
        <name>2</name>
        <sequence type="described" ref="VSP_019051"/>
    </isoform>
</comment>
<comment type="similarity">
    <text evidence="10">Belongs to the receptors of complement activation (RCA) family.</text>
</comment>
<proteinExistence type="evidence at protein level"/>
<feature type="signal peptide" evidence="2">
    <location>
        <begin position="1"/>
        <end position="35"/>
    </location>
</feature>
<feature type="chain" id="PRO_0000238979" description="Complement component receptor 1-like protein">
    <location>
        <begin position="36"/>
        <end position="559"/>
    </location>
</feature>
<feature type="topological domain" description="Extracellular" evidence="2">
    <location>
        <begin position="36"/>
        <end position="482"/>
    </location>
</feature>
<feature type="transmembrane region" description="Helical" evidence="2">
    <location>
        <begin position="483"/>
        <end position="503"/>
    </location>
</feature>
<feature type="topological domain" description="Cytoplasmic" evidence="2">
    <location>
        <begin position="504"/>
        <end position="559"/>
    </location>
</feature>
<feature type="domain" description="Sushi 1" evidence="3">
    <location>
        <begin position="36"/>
        <end position="96"/>
    </location>
</feature>
<feature type="domain" description="Sushi 2" evidence="3">
    <location>
        <begin position="97"/>
        <end position="158"/>
    </location>
</feature>
<feature type="domain" description="Sushi 3" evidence="3">
    <location>
        <begin position="159"/>
        <end position="229"/>
    </location>
</feature>
<feature type="domain" description="Sushi 4" evidence="3">
    <location>
        <begin position="231"/>
        <end position="290"/>
    </location>
</feature>
<feature type="domain" description="Sushi 5" evidence="3">
    <location>
        <begin position="292"/>
        <end position="354"/>
    </location>
</feature>
<feature type="domain" description="Sushi 6" evidence="3">
    <location>
        <begin position="355"/>
        <end position="415"/>
    </location>
</feature>
<feature type="domain" description="Sushi 7" evidence="3">
    <location>
        <begin position="417"/>
        <end position="477"/>
    </location>
</feature>
<feature type="region of interest" description="Disordered" evidence="4">
    <location>
        <begin position="535"/>
        <end position="559"/>
    </location>
</feature>
<feature type="modified residue" description="Phosphoserine" evidence="11">
    <location>
        <position position="527"/>
    </location>
</feature>
<feature type="modified residue" description="Phosphoserine" evidence="1">
    <location>
        <position position="531"/>
    </location>
</feature>
<feature type="modified residue" description="Phosphoserine" evidence="1">
    <location>
        <position position="537"/>
    </location>
</feature>
<feature type="modified residue" description="Phosphothreonine" evidence="1">
    <location>
        <position position="540"/>
    </location>
</feature>
<feature type="modified residue" description="Phosphoserine" evidence="11">
    <location>
        <position position="554"/>
    </location>
</feature>
<feature type="glycosylation site" description="O-linked (GalNAc...) threonine" evidence="2">
    <location>
        <position position="53"/>
    </location>
</feature>
<feature type="glycosylation site" description="N-linked (GlcNAc...) asparagine" evidence="2">
    <location>
        <position position="331"/>
    </location>
</feature>
<feature type="disulfide bond" evidence="3 6">
    <location>
        <begin position="38"/>
        <end position="81"/>
    </location>
</feature>
<feature type="disulfide bond" evidence="3 6">
    <location>
        <begin position="68"/>
        <end position="94"/>
    </location>
</feature>
<feature type="disulfide bond" evidence="3 6">
    <location>
        <begin position="99"/>
        <end position="140"/>
    </location>
</feature>
<feature type="disulfide bond" evidence="3 6">
    <location>
        <begin position="126"/>
        <end position="156"/>
    </location>
</feature>
<feature type="disulfide bond" evidence="3 6">
    <location>
        <begin position="161"/>
        <end position="210"/>
    </location>
</feature>
<feature type="disulfide bond" evidence="3 6">
    <location>
        <begin position="190"/>
        <end position="227"/>
    </location>
</feature>
<feature type="disulfide bond" evidence="3 6">
    <location>
        <begin position="233"/>
        <end position="275"/>
    </location>
</feature>
<feature type="disulfide bond" evidence="3 6">
    <location>
        <begin position="261"/>
        <end position="288"/>
    </location>
</feature>
<feature type="disulfide bond" evidence="3">
    <location>
        <begin position="294"/>
        <end position="336"/>
    </location>
</feature>
<feature type="disulfide bond" evidence="3">
    <location>
        <begin position="322"/>
        <end position="352"/>
    </location>
</feature>
<feature type="disulfide bond" evidence="3">
    <location>
        <begin position="357"/>
        <end position="400"/>
    </location>
</feature>
<feature type="disulfide bond" evidence="3">
    <location>
        <begin position="386"/>
        <end position="413"/>
    </location>
</feature>
<feature type="disulfide bond" evidence="3">
    <location>
        <begin position="419"/>
        <end position="462"/>
    </location>
</feature>
<feature type="disulfide bond" evidence="3">
    <location>
        <begin position="448"/>
        <end position="475"/>
    </location>
</feature>
<feature type="splice variant" id="VSP_019051" description="In isoform 2." evidence="9">
    <location>
        <begin position="354"/>
        <end position="415"/>
    </location>
</feature>
<feature type="sequence conflict" description="In Ref. 4; AA sequence." evidence="10" ref="4">
    <original>Y</original>
    <variation>Q</variation>
    <location>
        <position position="66"/>
    </location>
</feature>
<feature type="sequence conflict" description="In Ref. 4; AA sequence." evidence="10" ref="4">
    <original>R</original>
    <variation>Q</variation>
    <location>
        <position position="69"/>
    </location>
</feature>
<feature type="strand" evidence="12">
    <location>
        <begin position="45"/>
        <end position="51"/>
    </location>
</feature>
<feature type="strand" evidence="12">
    <location>
        <begin position="63"/>
        <end position="68"/>
    </location>
</feature>
<feature type="strand" evidence="12">
    <location>
        <begin position="76"/>
        <end position="81"/>
    </location>
</feature>
<feature type="strand" evidence="12">
    <location>
        <begin position="108"/>
        <end position="114"/>
    </location>
</feature>
<feature type="strand" evidence="12">
    <location>
        <begin position="121"/>
        <end position="126"/>
    </location>
</feature>
<feature type="strand" evidence="12">
    <location>
        <begin position="130"/>
        <end position="134"/>
    </location>
</feature>
<feature type="strand" evidence="12">
    <location>
        <begin position="136"/>
        <end position="143"/>
    </location>
</feature>
<feature type="strand" evidence="12">
    <location>
        <begin position="146"/>
        <end position="151"/>
    </location>
</feature>
<feature type="strand" evidence="12">
    <location>
        <begin position="155"/>
        <end position="158"/>
    </location>
</feature>
<feature type="strand" evidence="12">
    <location>
        <begin position="170"/>
        <end position="173"/>
    </location>
</feature>
<feature type="strand" evidence="12">
    <location>
        <begin position="185"/>
        <end position="190"/>
    </location>
</feature>
<feature type="strand" evidence="12">
    <location>
        <begin position="200"/>
        <end position="204"/>
    </location>
</feature>
<feature type="strand" evidence="12">
    <location>
        <begin position="206"/>
        <end position="222"/>
    </location>
</feature>
<feature type="strand" evidence="12">
    <location>
        <begin position="226"/>
        <end position="229"/>
    </location>
</feature>
<feature type="strand" evidence="12">
    <location>
        <begin position="241"/>
        <end position="243"/>
    </location>
</feature>
<feature type="strand" evidence="12">
    <location>
        <begin position="249"/>
        <end position="252"/>
    </location>
</feature>
<feature type="strand" evidence="12">
    <location>
        <begin position="256"/>
        <end position="261"/>
    </location>
</feature>
<feature type="strand" evidence="12">
    <location>
        <begin position="266"/>
        <end position="269"/>
    </location>
</feature>
<feature type="strand" evidence="12">
    <location>
        <begin position="271"/>
        <end position="276"/>
    </location>
</feature>
<feature type="turn" evidence="12">
    <location>
        <begin position="277"/>
        <end position="279"/>
    </location>
</feature>
<feature type="strand" evidence="12">
    <location>
        <begin position="280"/>
        <end position="283"/>
    </location>
</feature>
<accession>Q63135</accession>
<accession>Q63612</accession>
<evidence type="ECO:0000250" key="1">
    <source>
        <dbReference type="UniProtKB" id="Q64735"/>
    </source>
</evidence>
<evidence type="ECO:0000255" key="2"/>
<evidence type="ECO:0000255" key="3">
    <source>
        <dbReference type="PROSITE-ProRule" id="PRU00302"/>
    </source>
</evidence>
<evidence type="ECO:0000256" key="4">
    <source>
        <dbReference type="SAM" id="MobiDB-lite"/>
    </source>
</evidence>
<evidence type="ECO:0000269" key="5">
    <source>
    </source>
</evidence>
<evidence type="ECO:0000269" key="6">
    <source>
    </source>
</evidence>
<evidence type="ECO:0000269" key="7">
    <source>
    </source>
</evidence>
<evidence type="ECO:0000269" key="8">
    <source>
    </source>
</evidence>
<evidence type="ECO:0000303" key="9">
    <source>
    </source>
</evidence>
<evidence type="ECO:0000305" key="10"/>
<evidence type="ECO:0007744" key="11">
    <source>
    </source>
</evidence>
<evidence type="ECO:0007829" key="12">
    <source>
        <dbReference type="PDB" id="2XRB"/>
    </source>
</evidence>
<protein>
    <recommendedName>
        <fullName>Complement component receptor 1-like protein</fullName>
    </recommendedName>
    <alternativeName>
        <fullName>Antigen 5I2</fullName>
    </alternativeName>
    <alternativeName>
        <fullName>Complement regulatory protein Crry</fullName>
    </alternativeName>
</protein>
<gene>
    <name type="primary">Cr1l</name>
    <name type="synonym">Crry</name>
</gene>
<sequence length="559" mass="61680">MEASSPLDPVGRLVAFCRGGVHLAVLLLFLSPSTLGQCPAPPLFPYAKPINPTDESTFPVGTSLKYECRPGYIKRQFSITCEVNSVWTSPQDVCIRKQCETPLDPQNGIVHVNTDIRFGSSITYTCNEGYRLIGSSSAMCIISDQSVAWDAEAPICESIPCEIPPSIPNGDFFSPNREDFHYGMVVTYQCNTDARGKKLFNLVGEPSIHCTSIDGQVGVWSGPPPQCIELNKCTPPHVENAVIVSKNKSLFSLRDMVEFRCQDGFMMKGDSSVYCRSLNRWEPQLPSCFKVKSCGAFLGELPNGHVFVPQNLQLGAKVTFVCNTGYQLKGNSSSHCVLDGVESIWNSSVPVCEQVICKLPQDMSGFQKGLQMKKDYYYGDNVALECEDGYTLEGSSQSQCQSDASWDPPLPKCVSQVICKLPQDMSGFQKGLQMKKDYYYGDNVALECEDGYTLEGSSQSQCQSDASWDPPLPKCVSRSNSGLIAGIFIGIIVLILFIIFSYWMIMKFKKRNSTNEKCKEVGIYLNSKEDSCVQPQSLLTSQENNSTSSPARNSLTQEV</sequence>
<keyword id="KW-0002">3D-structure</keyword>
<keyword id="KW-0025">Alternative splicing</keyword>
<keyword id="KW-0180">Complement pathway</keyword>
<keyword id="KW-0217">Developmental protein</keyword>
<keyword id="KW-0903">Direct protein sequencing</keyword>
<keyword id="KW-1015">Disulfide bond</keyword>
<keyword id="KW-0325">Glycoprotein</keyword>
<keyword id="KW-0391">Immunity</keyword>
<keyword id="KW-0399">Innate immunity</keyword>
<keyword id="KW-0472">Membrane</keyword>
<keyword id="KW-0597">Phosphoprotein</keyword>
<keyword id="KW-0635">Pregnancy</keyword>
<keyword id="KW-0675">Receptor</keyword>
<keyword id="KW-1185">Reference proteome</keyword>
<keyword id="KW-0677">Repeat</keyword>
<keyword id="KW-0732">Signal</keyword>
<keyword id="KW-0768">Sushi</keyword>
<keyword id="KW-0812">Transmembrane</keyword>
<keyword id="KW-1133">Transmembrane helix</keyword>
<organism>
    <name type="scientific">Rattus norvegicus</name>
    <name type="common">Rat</name>
    <dbReference type="NCBI Taxonomy" id="10116"/>
    <lineage>
        <taxon>Eukaryota</taxon>
        <taxon>Metazoa</taxon>
        <taxon>Chordata</taxon>
        <taxon>Craniata</taxon>
        <taxon>Vertebrata</taxon>
        <taxon>Euteleostomi</taxon>
        <taxon>Mammalia</taxon>
        <taxon>Eutheria</taxon>
        <taxon>Euarchontoglires</taxon>
        <taxon>Glires</taxon>
        <taxon>Rodentia</taxon>
        <taxon>Myomorpha</taxon>
        <taxon>Muroidea</taxon>
        <taxon>Muridae</taxon>
        <taxon>Murinae</taxon>
        <taxon>Rattus</taxon>
    </lineage>
</organism>
<name>CR1L_RAT</name>
<dbReference type="EMBL" id="D42114">
    <property type="protein sequence ID" value="BAA07698.1"/>
    <property type="molecule type" value="mRNA"/>
</dbReference>
<dbReference type="EMBL" id="D42115">
    <property type="protein sequence ID" value="BAA22548.1"/>
    <property type="molecule type" value="mRNA"/>
</dbReference>
<dbReference type="EMBL" id="L36532">
    <property type="protein sequence ID" value="AAA91821.1"/>
    <property type="molecule type" value="mRNA"/>
</dbReference>
<dbReference type="EMBL" id="BC061736">
    <property type="protein sequence ID" value="AAH61736.1"/>
    <property type="molecule type" value="mRNA"/>
</dbReference>
<dbReference type="PIR" id="JC2054">
    <property type="entry name" value="JC2054"/>
</dbReference>
<dbReference type="RefSeq" id="NP_001005265.1">
    <molecule id="Q63135-2"/>
    <property type="nucleotide sequence ID" value="NM_001005265.1"/>
</dbReference>
<dbReference type="RefSeq" id="NP_001005330.1">
    <property type="nucleotide sequence ID" value="NM_001005330.1"/>
</dbReference>
<dbReference type="RefSeq" id="NP_062174.1">
    <molecule id="Q63135-1"/>
    <property type="nucleotide sequence ID" value="NM_019301.2"/>
</dbReference>
<dbReference type="PDB" id="1NTJ">
    <property type="method" value="X-ray"/>
    <property type="resolution" value="30.00 A"/>
    <property type="chains" value="A=34-353"/>
</dbReference>
<dbReference type="PDB" id="2XRB">
    <property type="method" value="X-ray"/>
    <property type="resolution" value="2.50 A"/>
    <property type="chains" value="A=1-288"/>
</dbReference>
<dbReference type="PDB" id="2XRD">
    <property type="method" value="X-ray"/>
    <property type="resolution" value="3.50 A"/>
    <property type="chains" value="A=1-288"/>
</dbReference>
<dbReference type="PDBsum" id="1NTJ"/>
<dbReference type="PDBsum" id="2XRB"/>
<dbReference type="PDBsum" id="2XRD"/>
<dbReference type="SMR" id="Q63135"/>
<dbReference type="FunCoup" id="Q63135">
    <property type="interactions" value="218"/>
</dbReference>
<dbReference type="STRING" id="10116.ENSRNOP00000074390"/>
<dbReference type="GlyCosmos" id="Q63135">
    <property type="glycosylation" value="2 sites, No reported glycans"/>
</dbReference>
<dbReference type="GlyGen" id="Q63135">
    <property type="glycosylation" value="2 sites"/>
</dbReference>
<dbReference type="iPTMnet" id="Q63135"/>
<dbReference type="PhosphoSitePlus" id="Q63135"/>
<dbReference type="jPOST" id="Q63135"/>
<dbReference type="GeneID" id="54243"/>
<dbReference type="KEGG" id="rno:54243"/>
<dbReference type="AGR" id="RGD:2399"/>
<dbReference type="CTD" id="1379"/>
<dbReference type="RGD" id="2399">
    <property type="gene designation" value="Cr1l"/>
</dbReference>
<dbReference type="VEuPathDB" id="HostDB:ENSRNOG00000008193"/>
<dbReference type="eggNOG" id="KOG4297">
    <property type="taxonomic scope" value="Eukaryota"/>
</dbReference>
<dbReference type="HOGENOM" id="CLU_020107_5_2_1"/>
<dbReference type="InParanoid" id="Q63135"/>
<dbReference type="OrthoDB" id="6127264at2759"/>
<dbReference type="PhylomeDB" id="Q63135"/>
<dbReference type="TreeFam" id="TF334137"/>
<dbReference type="Reactome" id="R-RNO-6798695">
    <property type="pathway name" value="Neutrophil degranulation"/>
</dbReference>
<dbReference type="Reactome" id="R-RNO-977606">
    <property type="pathway name" value="Regulation of Complement cascade"/>
</dbReference>
<dbReference type="EvolutionaryTrace" id="Q63135"/>
<dbReference type="PRO" id="PR:Q63135"/>
<dbReference type="Proteomes" id="UP000002494">
    <property type="component" value="Chromosome 13"/>
</dbReference>
<dbReference type="Bgee" id="ENSRNOG00000008193">
    <property type="expression patterns" value="Expressed in lung and 20 other cell types or tissues"/>
</dbReference>
<dbReference type="ExpressionAtlas" id="Q63135">
    <property type="expression patterns" value="baseline and differential"/>
</dbReference>
<dbReference type="GO" id="GO:0016323">
    <property type="term" value="C:basolateral plasma membrane"/>
    <property type="evidence" value="ECO:0000266"/>
    <property type="project" value="RGD"/>
</dbReference>
<dbReference type="GO" id="GO:0009986">
    <property type="term" value="C:cell surface"/>
    <property type="evidence" value="ECO:0000266"/>
    <property type="project" value="RGD"/>
</dbReference>
<dbReference type="GO" id="GO:0009897">
    <property type="term" value="C:external side of plasma membrane"/>
    <property type="evidence" value="ECO:0000266"/>
    <property type="project" value="RGD"/>
</dbReference>
<dbReference type="GO" id="GO:0005615">
    <property type="term" value="C:extracellular space"/>
    <property type="evidence" value="ECO:0000318"/>
    <property type="project" value="GO_Central"/>
</dbReference>
<dbReference type="GO" id="GO:0005886">
    <property type="term" value="C:plasma membrane"/>
    <property type="evidence" value="ECO:0000318"/>
    <property type="project" value="GO_Central"/>
</dbReference>
<dbReference type="GO" id="GO:0043235">
    <property type="term" value="C:receptor complex"/>
    <property type="evidence" value="ECO:0000266"/>
    <property type="project" value="RGD"/>
</dbReference>
<dbReference type="GO" id="GO:0071456">
    <property type="term" value="P:cellular response to hypoxia"/>
    <property type="evidence" value="ECO:0000266"/>
    <property type="project" value="RGD"/>
</dbReference>
<dbReference type="GO" id="GO:0006956">
    <property type="term" value="P:complement activation"/>
    <property type="evidence" value="ECO:0000266"/>
    <property type="project" value="RGD"/>
</dbReference>
<dbReference type="GO" id="GO:0006958">
    <property type="term" value="P:complement activation, classical pathway"/>
    <property type="evidence" value="ECO:0007669"/>
    <property type="project" value="UniProtKB-KW"/>
</dbReference>
<dbReference type="GO" id="GO:0007565">
    <property type="term" value="P:female pregnancy"/>
    <property type="evidence" value="ECO:0007669"/>
    <property type="project" value="UniProtKB-KW"/>
</dbReference>
<dbReference type="GO" id="GO:0001701">
    <property type="term" value="P:in utero embryonic development"/>
    <property type="evidence" value="ECO:0000266"/>
    <property type="project" value="RGD"/>
</dbReference>
<dbReference type="GO" id="GO:0045087">
    <property type="term" value="P:innate immune response"/>
    <property type="evidence" value="ECO:0007669"/>
    <property type="project" value="UniProtKB-KW"/>
</dbReference>
<dbReference type="GO" id="GO:0045916">
    <property type="term" value="P:negative regulation of complement activation"/>
    <property type="evidence" value="ECO:0000315"/>
    <property type="project" value="RGD"/>
</dbReference>
<dbReference type="GO" id="GO:0045959">
    <property type="term" value="P:negative regulation of complement activation, classical pathway"/>
    <property type="evidence" value="ECO:0000318"/>
    <property type="project" value="GO_Central"/>
</dbReference>
<dbReference type="GO" id="GO:0030449">
    <property type="term" value="P:regulation of complement activation"/>
    <property type="evidence" value="ECO:0000266"/>
    <property type="project" value="RGD"/>
</dbReference>
<dbReference type="GO" id="GO:1903659">
    <property type="term" value="P:regulation of complement-dependent cytotoxicity"/>
    <property type="evidence" value="ECO:0000266"/>
    <property type="project" value="RGD"/>
</dbReference>
<dbReference type="GO" id="GO:0002456">
    <property type="term" value="P:T cell mediated immunity"/>
    <property type="evidence" value="ECO:0000318"/>
    <property type="project" value="GO_Central"/>
</dbReference>
<dbReference type="CDD" id="cd00033">
    <property type="entry name" value="CCP"/>
    <property type="match status" value="7"/>
</dbReference>
<dbReference type="FunFam" id="2.10.70.10:FF:000038">
    <property type="entry name" value="Complement component receptor type 1"/>
    <property type="match status" value="2"/>
</dbReference>
<dbReference type="FunFam" id="2.10.70.10:FF:000044">
    <property type="entry name" value="Complement component receptor type 1"/>
    <property type="match status" value="1"/>
</dbReference>
<dbReference type="FunFam" id="2.10.70.10:FF:000014">
    <property type="entry name" value="Membrane cofactor protein"/>
    <property type="match status" value="3"/>
</dbReference>
<dbReference type="Gene3D" id="2.10.70.10">
    <property type="entry name" value="Complement Module, domain 1"/>
    <property type="match status" value="7"/>
</dbReference>
<dbReference type="InterPro" id="IPR051277">
    <property type="entry name" value="SEZ6_CSMD_C4BPB_Regulators"/>
</dbReference>
<dbReference type="InterPro" id="IPR035976">
    <property type="entry name" value="Sushi/SCR/CCP_sf"/>
</dbReference>
<dbReference type="InterPro" id="IPR000436">
    <property type="entry name" value="Sushi_SCR_CCP_dom"/>
</dbReference>
<dbReference type="PANTHER" id="PTHR45656:SF3">
    <property type="entry name" value="CUB AND SUSHI DOMAIN-CONTAINING PROTEIN 1"/>
    <property type="match status" value="1"/>
</dbReference>
<dbReference type="PANTHER" id="PTHR45656">
    <property type="entry name" value="PROTEIN CBR-CLEC-78"/>
    <property type="match status" value="1"/>
</dbReference>
<dbReference type="Pfam" id="PF00084">
    <property type="entry name" value="Sushi"/>
    <property type="match status" value="7"/>
</dbReference>
<dbReference type="SMART" id="SM00032">
    <property type="entry name" value="CCP"/>
    <property type="match status" value="7"/>
</dbReference>
<dbReference type="SUPFAM" id="SSF57535">
    <property type="entry name" value="Complement control module/SCR domain"/>
    <property type="match status" value="7"/>
</dbReference>
<dbReference type="PROSITE" id="PS50923">
    <property type="entry name" value="SUSHI"/>
    <property type="match status" value="7"/>
</dbReference>